<protein>
    <recommendedName>
        <fullName evidence="1">Large ribosomal subunit protein uL3</fullName>
    </recommendedName>
    <alternativeName>
        <fullName evidence="2">50S ribosomal protein L3</fullName>
    </alternativeName>
</protein>
<dbReference type="EMBL" id="CP000822">
    <property type="protein sequence ID" value="ABV15783.1"/>
    <property type="molecule type" value="Genomic_DNA"/>
</dbReference>
<dbReference type="RefSeq" id="WP_000579837.1">
    <property type="nucleotide sequence ID" value="NC_009792.1"/>
</dbReference>
<dbReference type="SMR" id="A8AQM0"/>
<dbReference type="STRING" id="290338.CKO_04738"/>
<dbReference type="GeneID" id="66757775"/>
<dbReference type="KEGG" id="cko:CKO_04738"/>
<dbReference type="HOGENOM" id="CLU_044142_4_1_6"/>
<dbReference type="OrthoDB" id="9806135at2"/>
<dbReference type="Proteomes" id="UP000008148">
    <property type="component" value="Chromosome"/>
</dbReference>
<dbReference type="GO" id="GO:0022625">
    <property type="term" value="C:cytosolic large ribosomal subunit"/>
    <property type="evidence" value="ECO:0007669"/>
    <property type="project" value="TreeGrafter"/>
</dbReference>
<dbReference type="GO" id="GO:0019843">
    <property type="term" value="F:rRNA binding"/>
    <property type="evidence" value="ECO:0007669"/>
    <property type="project" value="UniProtKB-UniRule"/>
</dbReference>
<dbReference type="GO" id="GO:0003735">
    <property type="term" value="F:structural constituent of ribosome"/>
    <property type="evidence" value="ECO:0007669"/>
    <property type="project" value="InterPro"/>
</dbReference>
<dbReference type="GO" id="GO:0006412">
    <property type="term" value="P:translation"/>
    <property type="evidence" value="ECO:0007669"/>
    <property type="project" value="UniProtKB-UniRule"/>
</dbReference>
<dbReference type="FunFam" id="2.40.30.10:FF:000004">
    <property type="entry name" value="50S ribosomal protein L3"/>
    <property type="match status" value="1"/>
</dbReference>
<dbReference type="FunFam" id="3.30.160.810:FF:000001">
    <property type="entry name" value="50S ribosomal protein L3"/>
    <property type="match status" value="1"/>
</dbReference>
<dbReference type="Gene3D" id="3.30.160.810">
    <property type="match status" value="1"/>
</dbReference>
<dbReference type="Gene3D" id="2.40.30.10">
    <property type="entry name" value="Translation factors"/>
    <property type="match status" value="1"/>
</dbReference>
<dbReference type="HAMAP" id="MF_01325_B">
    <property type="entry name" value="Ribosomal_uL3_B"/>
    <property type="match status" value="1"/>
</dbReference>
<dbReference type="InterPro" id="IPR000597">
    <property type="entry name" value="Ribosomal_uL3"/>
</dbReference>
<dbReference type="InterPro" id="IPR019927">
    <property type="entry name" value="Ribosomal_uL3_bac/org-type"/>
</dbReference>
<dbReference type="InterPro" id="IPR019926">
    <property type="entry name" value="Ribosomal_uL3_CS"/>
</dbReference>
<dbReference type="InterPro" id="IPR009000">
    <property type="entry name" value="Transl_B-barrel_sf"/>
</dbReference>
<dbReference type="NCBIfam" id="TIGR03625">
    <property type="entry name" value="L3_bact"/>
    <property type="match status" value="1"/>
</dbReference>
<dbReference type="PANTHER" id="PTHR11229">
    <property type="entry name" value="50S RIBOSOMAL PROTEIN L3"/>
    <property type="match status" value="1"/>
</dbReference>
<dbReference type="PANTHER" id="PTHR11229:SF16">
    <property type="entry name" value="LARGE RIBOSOMAL SUBUNIT PROTEIN UL3C"/>
    <property type="match status" value="1"/>
</dbReference>
<dbReference type="Pfam" id="PF00297">
    <property type="entry name" value="Ribosomal_L3"/>
    <property type="match status" value="1"/>
</dbReference>
<dbReference type="SUPFAM" id="SSF50447">
    <property type="entry name" value="Translation proteins"/>
    <property type="match status" value="1"/>
</dbReference>
<dbReference type="PROSITE" id="PS00474">
    <property type="entry name" value="RIBOSOMAL_L3"/>
    <property type="match status" value="1"/>
</dbReference>
<reference key="1">
    <citation type="submission" date="2007-08" db="EMBL/GenBank/DDBJ databases">
        <authorList>
            <consortium name="The Citrobacter koseri Genome Sequencing Project"/>
            <person name="McClelland M."/>
            <person name="Sanderson E.K."/>
            <person name="Porwollik S."/>
            <person name="Spieth J."/>
            <person name="Clifton W.S."/>
            <person name="Latreille P."/>
            <person name="Courtney L."/>
            <person name="Wang C."/>
            <person name="Pepin K."/>
            <person name="Bhonagiri V."/>
            <person name="Nash W."/>
            <person name="Johnson M."/>
            <person name="Thiruvilangam P."/>
            <person name="Wilson R."/>
        </authorList>
    </citation>
    <scope>NUCLEOTIDE SEQUENCE [LARGE SCALE GENOMIC DNA]</scope>
    <source>
        <strain>ATCC BAA-895 / CDC 4225-83 / SGSC4696</strain>
    </source>
</reference>
<keyword id="KW-0488">Methylation</keyword>
<keyword id="KW-1185">Reference proteome</keyword>
<keyword id="KW-0687">Ribonucleoprotein</keyword>
<keyword id="KW-0689">Ribosomal protein</keyword>
<keyword id="KW-0694">RNA-binding</keyword>
<keyword id="KW-0699">rRNA-binding</keyword>
<evidence type="ECO:0000255" key="1">
    <source>
        <dbReference type="HAMAP-Rule" id="MF_01325"/>
    </source>
</evidence>
<evidence type="ECO:0000305" key="2"/>
<proteinExistence type="inferred from homology"/>
<name>RL3_CITK8</name>
<sequence>MIGLVGKKVGMTRIFTEDGVSIPVTVIEVEANRVTQVKDLANDGYRAVQVTTGAKKANRVTKPEAGHFAKAGVEAGRGLWEFRLAEGEEYTVGQSISVELFADVKKVDVTGTSKGKGFAGTVKRWNFRTQDATHGNSLSHRVPGSIGQNQTPGKVFKGKKMAGQLGNERVTVQSLDVVRVDAERNLLLVKGGVPGATGCDLIVKPAVKA</sequence>
<gene>
    <name evidence="1" type="primary">rplC</name>
    <name type="ordered locus">CKO_04738</name>
</gene>
<comment type="function">
    <text evidence="1">One of the primary rRNA binding proteins, it binds directly near the 3'-end of the 23S rRNA, where it nucleates assembly of the 50S subunit.</text>
</comment>
<comment type="subunit">
    <text evidence="1">Part of the 50S ribosomal subunit. Forms a cluster with proteins L14 and L19.</text>
</comment>
<comment type="PTM">
    <text evidence="1">Methylated by PrmB.</text>
</comment>
<comment type="similarity">
    <text evidence="1">Belongs to the universal ribosomal protein uL3 family.</text>
</comment>
<accession>A8AQM0</accession>
<organism>
    <name type="scientific">Citrobacter koseri (strain ATCC BAA-895 / CDC 4225-83 / SGSC4696)</name>
    <dbReference type="NCBI Taxonomy" id="290338"/>
    <lineage>
        <taxon>Bacteria</taxon>
        <taxon>Pseudomonadati</taxon>
        <taxon>Pseudomonadota</taxon>
        <taxon>Gammaproteobacteria</taxon>
        <taxon>Enterobacterales</taxon>
        <taxon>Enterobacteriaceae</taxon>
        <taxon>Citrobacter</taxon>
    </lineage>
</organism>
<feature type="chain" id="PRO_1000052031" description="Large ribosomal subunit protein uL3">
    <location>
        <begin position="1"/>
        <end position="209"/>
    </location>
</feature>
<feature type="modified residue" description="N5-methylglutamine" evidence="1">
    <location>
        <position position="150"/>
    </location>
</feature>